<evidence type="ECO:0000250" key="1"/>
<evidence type="ECO:0000250" key="2">
    <source>
        <dbReference type="UniProtKB" id="Q8K1H1"/>
    </source>
</evidence>
<evidence type="ECO:0000250" key="3">
    <source>
        <dbReference type="UniProtKB" id="Q8NHU6"/>
    </source>
</evidence>
<evidence type="ECO:0000255" key="4">
    <source>
        <dbReference type="PROSITE-ProRule" id="PRU00211"/>
    </source>
</evidence>
<evidence type="ECO:0000255" key="5">
    <source>
        <dbReference type="PROSITE-ProRule" id="PRU00975"/>
    </source>
</evidence>
<evidence type="ECO:0000256" key="6">
    <source>
        <dbReference type="SAM" id="MobiDB-lite"/>
    </source>
</evidence>
<evidence type="ECO:0000305" key="7"/>
<proteinExistence type="inferred from homology"/>
<reference key="1">
    <citation type="journal article" date="2010" name="Nature">
        <title>The sequence and de novo assembly of the giant panda genome.</title>
        <authorList>
            <person name="Li R."/>
            <person name="Fan W."/>
            <person name="Tian G."/>
            <person name="Zhu H."/>
            <person name="He L."/>
            <person name="Cai J."/>
            <person name="Huang Q."/>
            <person name="Cai Q."/>
            <person name="Li B."/>
            <person name="Bai Y."/>
            <person name="Zhang Z."/>
            <person name="Zhang Y."/>
            <person name="Wang W."/>
            <person name="Li J."/>
            <person name="Wei F."/>
            <person name="Li H."/>
            <person name="Jian M."/>
            <person name="Li J."/>
            <person name="Zhang Z."/>
            <person name="Nielsen R."/>
            <person name="Li D."/>
            <person name="Gu W."/>
            <person name="Yang Z."/>
            <person name="Xuan Z."/>
            <person name="Ryder O.A."/>
            <person name="Leung F.C."/>
            <person name="Zhou Y."/>
            <person name="Cao J."/>
            <person name="Sun X."/>
            <person name="Fu Y."/>
            <person name="Fang X."/>
            <person name="Guo X."/>
            <person name="Wang B."/>
            <person name="Hou R."/>
            <person name="Shen F."/>
            <person name="Mu B."/>
            <person name="Ni P."/>
            <person name="Lin R."/>
            <person name="Qian W."/>
            <person name="Wang G."/>
            <person name="Yu C."/>
            <person name="Nie W."/>
            <person name="Wang J."/>
            <person name="Wu Z."/>
            <person name="Liang H."/>
            <person name="Min J."/>
            <person name="Wu Q."/>
            <person name="Cheng S."/>
            <person name="Ruan J."/>
            <person name="Wang M."/>
            <person name="Shi Z."/>
            <person name="Wen M."/>
            <person name="Liu B."/>
            <person name="Ren X."/>
            <person name="Zheng H."/>
            <person name="Dong D."/>
            <person name="Cook K."/>
            <person name="Shan G."/>
            <person name="Zhang H."/>
            <person name="Kosiol C."/>
            <person name="Xie X."/>
            <person name="Lu Z."/>
            <person name="Zheng H."/>
            <person name="Li Y."/>
            <person name="Steiner C.C."/>
            <person name="Lam T.T."/>
            <person name="Lin S."/>
            <person name="Zhang Q."/>
            <person name="Li G."/>
            <person name="Tian J."/>
            <person name="Gong T."/>
            <person name="Liu H."/>
            <person name="Zhang D."/>
            <person name="Fang L."/>
            <person name="Ye C."/>
            <person name="Zhang J."/>
            <person name="Hu W."/>
            <person name="Xu A."/>
            <person name="Ren Y."/>
            <person name="Zhang G."/>
            <person name="Bruford M.W."/>
            <person name="Li Q."/>
            <person name="Ma L."/>
            <person name="Guo Y."/>
            <person name="An N."/>
            <person name="Hu Y."/>
            <person name="Zheng Y."/>
            <person name="Shi Y."/>
            <person name="Li Z."/>
            <person name="Liu Q."/>
            <person name="Chen Y."/>
            <person name="Zhao J."/>
            <person name="Qu N."/>
            <person name="Zhao S."/>
            <person name="Tian F."/>
            <person name="Wang X."/>
            <person name="Wang H."/>
            <person name="Xu L."/>
            <person name="Liu X."/>
            <person name="Vinar T."/>
            <person name="Wang Y."/>
            <person name="Lam T.W."/>
            <person name="Yiu S.M."/>
            <person name="Liu S."/>
            <person name="Zhang H."/>
            <person name="Li D."/>
            <person name="Huang Y."/>
            <person name="Wang X."/>
            <person name="Yang G."/>
            <person name="Jiang Z."/>
            <person name="Wang J."/>
            <person name="Qin N."/>
            <person name="Li L."/>
            <person name="Li J."/>
            <person name="Bolund L."/>
            <person name="Kristiansen K."/>
            <person name="Wong G.K."/>
            <person name="Olson M."/>
            <person name="Zhang X."/>
            <person name="Li S."/>
            <person name="Yang H."/>
            <person name="Wang J."/>
            <person name="Wang J."/>
        </authorList>
    </citation>
    <scope>NUCLEOTIDE SEQUENCE [LARGE SCALE GENOMIC DNA]</scope>
</reference>
<feature type="chain" id="PRO_0000409514" description="Tudor domain-containing protein 7">
    <location>
        <begin position="1"/>
        <end position="1101"/>
    </location>
</feature>
<feature type="domain" description="HTH OST-type 1" evidence="5">
    <location>
        <begin position="3"/>
        <end position="76"/>
    </location>
</feature>
<feature type="domain" description="HTH OST-type 2" evidence="5">
    <location>
        <begin position="233"/>
        <end position="302"/>
    </location>
</feature>
<feature type="domain" description="HTH OST-type 3" evidence="5">
    <location>
        <begin position="337"/>
        <end position="406"/>
    </location>
</feature>
<feature type="domain" description="Tudor 1" evidence="4">
    <location>
        <begin position="513"/>
        <end position="573"/>
    </location>
</feature>
<feature type="domain" description="Tudor 2" evidence="4">
    <location>
        <begin position="706"/>
        <end position="763"/>
    </location>
</feature>
<feature type="region of interest" description="Disordered" evidence="6">
    <location>
        <begin position="126"/>
        <end position="147"/>
    </location>
</feature>
<feature type="region of interest" description="Disordered" evidence="6">
    <location>
        <begin position="859"/>
        <end position="880"/>
    </location>
</feature>
<feature type="region of interest" description="Interaction with CDK17" evidence="1">
    <location>
        <begin position="864"/>
        <end position="1101"/>
    </location>
</feature>
<feature type="region of interest" description="Interaction with CABLES1" evidence="1">
    <location>
        <begin position="896"/>
        <end position="1101"/>
    </location>
</feature>
<feature type="compositionally biased region" description="Polar residues" evidence="6">
    <location>
        <begin position="127"/>
        <end position="138"/>
    </location>
</feature>
<feature type="modified residue" description="Phosphoserine" evidence="3">
    <location>
        <position position="319"/>
    </location>
</feature>
<feature type="modified residue" description="Phosphoserine" evidence="2">
    <location>
        <position position="862"/>
    </location>
</feature>
<gene>
    <name type="primary">TDRD7</name>
    <name type="ORF">PANDA_002927</name>
</gene>
<sequence length="1101" mass="123818">MLEADLVSKMLRAVLQSHKNGIALPRLQGEYRSLTGDWIPFKQLGYPTLEAYLRSVPAVVRIETSRSGEITCYAMACTETARIAQLVARQRSSKRKTGRQVNCQMRVKKTMPFFLEGKPKATLRQPGISSDFSINKKPNPTLLRDRGNSLGVKSDAEMPPYTLHTTIGSQVFKDVPVQRHVTMSTNNRFSPKASLPPPFQMHLSRTCAKEMSDNLNQTVEKPNVTPPASYTYKMDEVQNRIKEILNKHNNGIWISKLPHFYKELYKEELNQGILQQFEHWPHICTVEKPCSGGQDLLLYPAKRKQLLRSELDGEKVPPSPLPAPKQLPPLKGCPAAMPGDFKEKVAELLAKYSSGLWASALPKAFEDMYKVKFPEDALKNLASLSDVCTIDYISGNPQKAILYAKLPLPADKILKDAGQAHGDYDIKSMIEQEYLQIEENISKSADTFVENTTVPPLIIPTEASPSVLVVELSNTNEVVIRYVGKDYSAAQELMEDEMKEYYSKNPKVMPVQTVHIGQLLAVNAEEDAWLRAQIISTEENKIKASTVCYVDYGFSENIEKSKAYKLNPKFCSLSFQATKCKLAGLEVLSDDPDLVKVVESLTCGKIFAVEILEKADIPLVVLYDTSGEDDVNINATCLKAICDKSLEAHLQIDAMYTNVRVTNICSDGTLYCQVPCKGLNKLNDLLHKIEDYFHCKHMTSEYFVSLPFCGKVCLFHCKGKWLRVEITNVHSSRALDVQFLDSGTVTSVKVSELREIPPRFLQEIIVIPPQAIKCCLADLPQSIGMWTPDAVLWLRDSVLNCSDCSIKVTKVDETRGIAHIYLFTPKNFPDPHRSINRQITNADLWKHQKDVFLSAISSAASSPNSKSGGTPIPGNSGENFRKSITDAIKKSVVDHSSSFSMQELPPPVHLSKPGEHMDVYVPVACHPGYFVIQPWQEIHKLEVLMEEMILYYSVSEERHVAVEKDQVYAAKVENKWHRVLLKGILTNGLVSVYELDYGKHELVNIRKVQPLADVFRKLPFQAVTAQLAGVKCNQWSEEASMVFRNHVEKKPLVALVQTVIENANPWDRKVVVYLVDTSLPDTDIWIHDFMSEYLVELSKVN</sequence>
<organism>
    <name type="scientific">Ailuropoda melanoleuca</name>
    <name type="common">Giant panda</name>
    <dbReference type="NCBI Taxonomy" id="9646"/>
    <lineage>
        <taxon>Eukaryota</taxon>
        <taxon>Metazoa</taxon>
        <taxon>Chordata</taxon>
        <taxon>Craniata</taxon>
        <taxon>Vertebrata</taxon>
        <taxon>Euteleostomi</taxon>
        <taxon>Mammalia</taxon>
        <taxon>Eutheria</taxon>
        <taxon>Laurasiatheria</taxon>
        <taxon>Carnivora</taxon>
        <taxon>Caniformia</taxon>
        <taxon>Ursidae</taxon>
        <taxon>Ailuropoda</taxon>
    </lineage>
</organism>
<name>TDRD7_AILME</name>
<protein>
    <recommendedName>
        <fullName>Tudor domain-containing protein 7</fullName>
    </recommendedName>
</protein>
<comment type="function">
    <text evidence="1">Component of specific cytoplasmic RNA granules involved in post-transcriptional regulation of specific genes: probably acts by binding to specific mRNAs and regulating their translation. Required for lens transparency during lens development, by regulating translation of genes such as CRYBB3 and HSPB1 in the developing lens. Also required during spermatogenesis (By similarity).</text>
</comment>
<comment type="subunit">
    <text evidence="1">Found in a mRNP complex, at least composed of TDRD1, TDRD6, TDRD7 and DDX4. Found in a complex containing CABLES1, CDK16 and CDK17. Interacts with CABLES1, CDK17 and PIWIL1 (By similarity).</text>
</comment>
<comment type="subcellular location">
    <subcellularLocation>
        <location evidence="1">Cytoplasm</location>
    </subcellularLocation>
    <text evidence="1">Localizes to cytoplasmic RNA granules (By similarity). Present in chromatoid body (CB) of spermatids (mammalian counterpart of germplasm, pole plasm or polar granules in Drosophila germ cells), also named processing bodies (P-bodies) in somatic cells. Detected in the multilobular cytoplasmic CBs (also called intermitochondrial cementin) in pachytene spermatocytes and as a single perinuclear CB in haploid round spermatids (By similarity).</text>
</comment>
<comment type="similarity">
    <text evidence="7">Belongs to the TDRD7 family.</text>
</comment>
<accession>D2H0H6</accession>
<keyword id="KW-0963">Cytoplasm</keyword>
<keyword id="KW-0221">Differentiation</keyword>
<keyword id="KW-0597">Phosphoprotein</keyword>
<keyword id="KW-1185">Reference proteome</keyword>
<keyword id="KW-0677">Repeat</keyword>
<keyword id="KW-0694">RNA-binding</keyword>
<keyword id="KW-0744">Spermatogenesis</keyword>
<dbReference type="EMBL" id="GL192407">
    <property type="protein sequence ID" value="EFB16852.1"/>
    <property type="molecule type" value="Genomic_DNA"/>
</dbReference>
<dbReference type="SMR" id="D2H0H6"/>
<dbReference type="FunCoup" id="D2H0H6">
    <property type="interactions" value="5"/>
</dbReference>
<dbReference type="STRING" id="9646.ENSAMEP00000005179"/>
<dbReference type="eggNOG" id="KOG2039">
    <property type="taxonomic scope" value="Eukaryota"/>
</dbReference>
<dbReference type="HOGENOM" id="CLU_283554_0_0_1"/>
<dbReference type="InParanoid" id="D2H0H6"/>
<dbReference type="Proteomes" id="UP000008912">
    <property type="component" value="Unassembled WGS sequence"/>
</dbReference>
<dbReference type="GO" id="GO:0043186">
    <property type="term" value="C:P granule"/>
    <property type="evidence" value="ECO:0007669"/>
    <property type="project" value="TreeGrafter"/>
</dbReference>
<dbReference type="GO" id="GO:0035770">
    <property type="term" value="C:ribonucleoprotein granule"/>
    <property type="evidence" value="ECO:0000250"/>
    <property type="project" value="UniProtKB"/>
</dbReference>
<dbReference type="GO" id="GO:0003729">
    <property type="term" value="F:mRNA binding"/>
    <property type="evidence" value="ECO:0000250"/>
    <property type="project" value="UniProtKB"/>
</dbReference>
<dbReference type="GO" id="GO:0070306">
    <property type="term" value="P:lens fiber cell differentiation"/>
    <property type="evidence" value="ECO:0000250"/>
    <property type="project" value="UniProtKB"/>
</dbReference>
<dbReference type="GO" id="GO:0002089">
    <property type="term" value="P:lens morphogenesis in camera-type eye"/>
    <property type="evidence" value="ECO:0000250"/>
    <property type="project" value="UniProtKB"/>
</dbReference>
<dbReference type="GO" id="GO:0030719">
    <property type="term" value="P:P granule organization"/>
    <property type="evidence" value="ECO:0007669"/>
    <property type="project" value="TreeGrafter"/>
</dbReference>
<dbReference type="GO" id="GO:0034587">
    <property type="term" value="P:piRNA processing"/>
    <property type="evidence" value="ECO:0007669"/>
    <property type="project" value="TreeGrafter"/>
</dbReference>
<dbReference type="GO" id="GO:0010608">
    <property type="term" value="P:post-transcriptional regulation of gene expression"/>
    <property type="evidence" value="ECO:0000250"/>
    <property type="project" value="UniProtKB"/>
</dbReference>
<dbReference type="GO" id="GO:0007283">
    <property type="term" value="P:spermatogenesis"/>
    <property type="evidence" value="ECO:0000250"/>
    <property type="project" value="UniProtKB"/>
</dbReference>
<dbReference type="CDD" id="cd09986">
    <property type="entry name" value="LOTUS_1_TDRD7"/>
    <property type="match status" value="1"/>
</dbReference>
<dbReference type="CDD" id="cd09973">
    <property type="entry name" value="LOTUS_2_TDRD7"/>
    <property type="match status" value="1"/>
</dbReference>
<dbReference type="CDD" id="cd09974">
    <property type="entry name" value="LOTUS_3_TDRD7"/>
    <property type="match status" value="1"/>
</dbReference>
<dbReference type="CDD" id="cd20427">
    <property type="entry name" value="Tudor_TDRD7_rpt1"/>
    <property type="match status" value="1"/>
</dbReference>
<dbReference type="CDD" id="cd20428">
    <property type="entry name" value="Tudor_TDRD7_rpt2"/>
    <property type="match status" value="1"/>
</dbReference>
<dbReference type="CDD" id="cd20429">
    <property type="entry name" value="Tudor_TDRD7_rpt3"/>
    <property type="match status" value="1"/>
</dbReference>
<dbReference type="FunFam" id="2.40.50.90:FF:000006">
    <property type="entry name" value="Tudor domain-containing protein 7"/>
    <property type="match status" value="1"/>
</dbReference>
<dbReference type="FunFam" id="3.30.420.610:FF:000008">
    <property type="entry name" value="Tudor domain-containing protein 7"/>
    <property type="match status" value="1"/>
</dbReference>
<dbReference type="FunFam" id="2.30.30.140:FF:000065">
    <property type="entry name" value="tudor domain-containing protein 7"/>
    <property type="match status" value="1"/>
</dbReference>
<dbReference type="FunFam" id="2.30.30.140:FF:000045">
    <property type="entry name" value="tudor domain-containing protein 7 isoform X1"/>
    <property type="match status" value="1"/>
</dbReference>
<dbReference type="FunFam" id="3.30.420.610:FF:000009">
    <property type="entry name" value="Tudor domain-containing protein 7 isoform X2"/>
    <property type="match status" value="1"/>
</dbReference>
<dbReference type="FunFam" id="2.30.30.140:FF:000053">
    <property type="entry name" value="tudor domain-containing protein 7 isoform X2"/>
    <property type="match status" value="1"/>
</dbReference>
<dbReference type="FunFam" id="3.30.420.610:FF:000006">
    <property type="entry name" value="tudor domain-containing protein 7 isoform X2"/>
    <property type="match status" value="1"/>
</dbReference>
<dbReference type="Gene3D" id="2.30.30.140">
    <property type="match status" value="3"/>
</dbReference>
<dbReference type="Gene3D" id="2.40.50.90">
    <property type="match status" value="3"/>
</dbReference>
<dbReference type="Gene3D" id="3.30.420.610">
    <property type="entry name" value="LOTUS domain-like"/>
    <property type="match status" value="3"/>
</dbReference>
<dbReference type="InterPro" id="IPR041966">
    <property type="entry name" value="LOTUS-like"/>
</dbReference>
<dbReference type="InterPro" id="IPR025605">
    <property type="entry name" value="OST-HTH/LOTUS_dom"/>
</dbReference>
<dbReference type="InterPro" id="IPR035437">
    <property type="entry name" value="SNase_OB-fold_sf"/>
</dbReference>
<dbReference type="InterPro" id="IPR037978">
    <property type="entry name" value="TDRD7_LOTUS_3"/>
</dbReference>
<dbReference type="InterPro" id="IPR002999">
    <property type="entry name" value="Tudor"/>
</dbReference>
<dbReference type="InterPro" id="IPR050621">
    <property type="entry name" value="Tudor_domain_containing"/>
</dbReference>
<dbReference type="InterPro" id="IPR047448">
    <property type="entry name" value="Tudor_TDRD7_rpt2"/>
</dbReference>
<dbReference type="InterPro" id="IPR047449">
    <property type="entry name" value="Tudor_TDRD7_rpt3"/>
</dbReference>
<dbReference type="PANTHER" id="PTHR22948">
    <property type="entry name" value="TUDOR DOMAIN CONTAINING PROTEIN"/>
    <property type="match status" value="1"/>
</dbReference>
<dbReference type="PANTHER" id="PTHR22948:SF14">
    <property type="entry name" value="TUDOR DOMAIN-CONTAINING PROTEIN 7"/>
    <property type="match status" value="1"/>
</dbReference>
<dbReference type="Pfam" id="PF12872">
    <property type="entry name" value="OST-HTH"/>
    <property type="match status" value="2"/>
</dbReference>
<dbReference type="Pfam" id="PF00567">
    <property type="entry name" value="TUDOR"/>
    <property type="match status" value="3"/>
</dbReference>
<dbReference type="SMART" id="SM00333">
    <property type="entry name" value="TUDOR"/>
    <property type="match status" value="3"/>
</dbReference>
<dbReference type="SUPFAM" id="SSF63748">
    <property type="entry name" value="Tudor/PWWP/MBT"/>
    <property type="match status" value="3"/>
</dbReference>
<dbReference type="PROSITE" id="PS51644">
    <property type="entry name" value="HTH_OST"/>
    <property type="match status" value="3"/>
</dbReference>
<dbReference type="PROSITE" id="PS50304">
    <property type="entry name" value="TUDOR"/>
    <property type="match status" value="2"/>
</dbReference>